<name>RISA_MYCTU</name>
<reference key="1">
    <citation type="journal article" date="1998" name="Nature">
        <title>Deciphering the biology of Mycobacterium tuberculosis from the complete genome sequence.</title>
        <authorList>
            <person name="Cole S.T."/>
            <person name="Brosch R."/>
            <person name="Parkhill J."/>
            <person name="Garnier T."/>
            <person name="Churcher C.M."/>
            <person name="Harris D.E."/>
            <person name="Gordon S.V."/>
            <person name="Eiglmeier K."/>
            <person name="Gas S."/>
            <person name="Barry C.E. III"/>
            <person name="Tekaia F."/>
            <person name="Badcock K."/>
            <person name="Basham D."/>
            <person name="Brown D."/>
            <person name="Chillingworth T."/>
            <person name="Connor R."/>
            <person name="Davies R.M."/>
            <person name="Devlin K."/>
            <person name="Feltwell T."/>
            <person name="Gentles S."/>
            <person name="Hamlin N."/>
            <person name="Holroyd S."/>
            <person name="Hornsby T."/>
            <person name="Jagels K."/>
            <person name="Krogh A."/>
            <person name="McLean J."/>
            <person name="Moule S."/>
            <person name="Murphy L.D."/>
            <person name="Oliver S."/>
            <person name="Osborne J."/>
            <person name="Quail M.A."/>
            <person name="Rajandream M.A."/>
            <person name="Rogers J."/>
            <person name="Rutter S."/>
            <person name="Seeger K."/>
            <person name="Skelton S."/>
            <person name="Squares S."/>
            <person name="Squares R."/>
            <person name="Sulston J.E."/>
            <person name="Taylor K."/>
            <person name="Whitehead S."/>
            <person name="Barrell B.G."/>
        </authorList>
    </citation>
    <scope>NUCLEOTIDE SEQUENCE [LARGE SCALE GENOMIC DNA]</scope>
    <source>
        <strain>ATCC 25618 / H37Rv</strain>
    </source>
</reference>
<reference key="2">
    <citation type="journal article" date="2011" name="Mol. Cell. Proteomics">
        <title>Proteogenomic analysis of Mycobacterium tuberculosis by high resolution mass spectrometry.</title>
        <authorList>
            <person name="Kelkar D.S."/>
            <person name="Kumar D."/>
            <person name="Kumar P."/>
            <person name="Balakrishnan L."/>
            <person name="Muthusamy B."/>
            <person name="Yadav A.K."/>
            <person name="Shrivastava P."/>
            <person name="Marimuthu A."/>
            <person name="Anand S."/>
            <person name="Sundaram H."/>
            <person name="Kingsbury R."/>
            <person name="Harsha H.C."/>
            <person name="Nair B."/>
            <person name="Prasad T.S."/>
            <person name="Chauhan D.S."/>
            <person name="Katoch K."/>
            <person name="Katoch V.M."/>
            <person name="Kumar P."/>
            <person name="Chaerkady R."/>
            <person name="Ramachandran S."/>
            <person name="Dash D."/>
            <person name="Pandey A."/>
        </authorList>
    </citation>
    <scope>IDENTIFICATION BY MASS SPECTROMETRY [LARGE SCALE ANALYSIS]</scope>
    <source>
        <strain>ATCC 25618 / H37Rv</strain>
    </source>
</reference>
<gene>
    <name type="primary">ribE</name>
    <name type="synonym">ribC</name>
    <name type="ordered locus">Rv1412</name>
    <name type="ORF">MTCY21B4.29</name>
</gene>
<dbReference type="EC" id="2.5.1.9"/>
<dbReference type="EMBL" id="AL123456">
    <property type="protein sequence ID" value="CCP44171.1"/>
    <property type="molecule type" value="Genomic_DNA"/>
</dbReference>
<dbReference type="PIR" id="A70902">
    <property type="entry name" value="A70902"/>
</dbReference>
<dbReference type="RefSeq" id="NP_215928.1">
    <property type="nucleotide sequence ID" value="NC_000962.3"/>
</dbReference>
<dbReference type="RefSeq" id="WP_003407318.1">
    <property type="nucleotide sequence ID" value="NZ_NVQJ01000038.1"/>
</dbReference>
<dbReference type="SMR" id="P9WK35"/>
<dbReference type="FunCoup" id="P9WK35">
    <property type="interactions" value="354"/>
</dbReference>
<dbReference type="STRING" id="83332.Rv1412"/>
<dbReference type="PaxDb" id="83332-Rv1412"/>
<dbReference type="DNASU" id="886690"/>
<dbReference type="GeneID" id="886690"/>
<dbReference type="KEGG" id="mtu:Rv1412"/>
<dbReference type="KEGG" id="mtv:RVBD_1412"/>
<dbReference type="TubercuList" id="Rv1412"/>
<dbReference type="eggNOG" id="COG0307">
    <property type="taxonomic scope" value="Bacteria"/>
</dbReference>
<dbReference type="InParanoid" id="P9WK35"/>
<dbReference type="OrthoDB" id="9788537at2"/>
<dbReference type="PhylomeDB" id="P9WK35"/>
<dbReference type="UniPathway" id="UPA00275">
    <property type="reaction ID" value="UER00405"/>
</dbReference>
<dbReference type="Proteomes" id="UP000001584">
    <property type="component" value="Chromosome"/>
</dbReference>
<dbReference type="GO" id="GO:0004746">
    <property type="term" value="F:riboflavin synthase activity"/>
    <property type="evidence" value="ECO:0000314"/>
    <property type="project" value="MTBBASE"/>
</dbReference>
<dbReference type="GO" id="GO:0009231">
    <property type="term" value="P:riboflavin biosynthetic process"/>
    <property type="evidence" value="ECO:0000314"/>
    <property type="project" value="MTBBASE"/>
</dbReference>
<dbReference type="CDD" id="cd00402">
    <property type="entry name" value="Riboflavin_synthase_like"/>
    <property type="match status" value="1"/>
</dbReference>
<dbReference type="FunFam" id="2.40.30.20:FF:000003">
    <property type="entry name" value="Riboflavin synthase, alpha subunit"/>
    <property type="match status" value="1"/>
</dbReference>
<dbReference type="FunFam" id="2.40.30.20:FF:000004">
    <property type="entry name" value="Riboflavin synthase, alpha subunit"/>
    <property type="match status" value="1"/>
</dbReference>
<dbReference type="Gene3D" id="2.40.30.20">
    <property type="match status" value="2"/>
</dbReference>
<dbReference type="InterPro" id="IPR023366">
    <property type="entry name" value="ATP_synth_asu-like_sf"/>
</dbReference>
<dbReference type="InterPro" id="IPR001783">
    <property type="entry name" value="Lumazine-bd"/>
</dbReference>
<dbReference type="InterPro" id="IPR026017">
    <property type="entry name" value="Lumazine-bd_dom"/>
</dbReference>
<dbReference type="InterPro" id="IPR017938">
    <property type="entry name" value="Riboflavin_synthase-like_b-brl"/>
</dbReference>
<dbReference type="NCBIfam" id="NF006767">
    <property type="entry name" value="PRK09289.1"/>
    <property type="match status" value="1"/>
</dbReference>
<dbReference type="NCBIfam" id="NF009566">
    <property type="entry name" value="PRK13020.1"/>
    <property type="match status" value="1"/>
</dbReference>
<dbReference type="NCBIfam" id="TIGR00187">
    <property type="entry name" value="ribE"/>
    <property type="match status" value="1"/>
</dbReference>
<dbReference type="PANTHER" id="PTHR21098:SF12">
    <property type="entry name" value="RIBOFLAVIN SYNTHASE"/>
    <property type="match status" value="1"/>
</dbReference>
<dbReference type="PANTHER" id="PTHR21098">
    <property type="entry name" value="RIBOFLAVIN SYNTHASE ALPHA CHAIN"/>
    <property type="match status" value="1"/>
</dbReference>
<dbReference type="Pfam" id="PF00677">
    <property type="entry name" value="Lum_binding"/>
    <property type="match status" value="2"/>
</dbReference>
<dbReference type="PIRSF" id="PIRSF000498">
    <property type="entry name" value="Riboflavin_syn_A"/>
    <property type="match status" value="1"/>
</dbReference>
<dbReference type="SUPFAM" id="SSF63380">
    <property type="entry name" value="Riboflavin synthase domain-like"/>
    <property type="match status" value="2"/>
</dbReference>
<dbReference type="PROSITE" id="PS51177">
    <property type="entry name" value="LUMAZINE_BIND"/>
    <property type="match status" value="2"/>
</dbReference>
<keyword id="KW-1185">Reference proteome</keyword>
<keyword id="KW-0677">Repeat</keyword>
<keyword id="KW-0686">Riboflavin biosynthesis</keyword>
<keyword id="KW-0808">Transferase</keyword>
<organism>
    <name type="scientific">Mycobacterium tuberculosis (strain ATCC 25618 / H37Rv)</name>
    <dbReference type="NCBI Taxonomy" id="83332"/>
    <lineage>
        <taxon>Bacteria</taxon>
        <taxon>Bacillati</taxon>
        <taxon>Actinomycetota</taxon>
        <taxon>Actinomycetes</taxon>
        <taxon>Mycobacteriales</taxon>
        <taxon>Mycobacteriaceae</taxon>
        <taxon>Mycobacterium</taxon>
        <taxon>Mycobacterium tuberculosis complex</taxon>
    </lineage>
</organism>
<comment type="function">
    <text evidence="1">Catalyzes the dismutation of two molecules of 6,7-dimethyl-8-ribityllumazine, resulting in the formation of riboflavin and 5-amino-6-(D-ribitylamino)uracil.</text>
</comment>
<comment type="catalytic activity">
    <reaction>
        <text>2 6,7-dimethyl-8-(1-D-ribityl)lumazine + H(+) = 5-amino-6-(D-ribitylamino)uracil + riboflavin</text>
        <dbReference type="Rhea" id="RHEA:20772"/>
        <dbReference type="ChEBI" id="CHEBI:15378"/>
        <dbReference type="ChEBI" id="CHEBI:15934"/>
        <dbReference type="ChEBI" id="CHEBI:57986"/>
        <dbReference type="ChEBI" id="CHEBI:58201"/>
        <dbReference type="EC" id="2.5.1.9"/>
    </reaction>
</comment>
<comment type="pathway">
    <text>Cofactor biosynthesis; riboflavin biosynthesis; riboflavin from 2-hydroxy-3-oxobutyl phosphate and 5-amino-6-(D-ribitylamino)uracil: step 2/2.</text>
</comment>
<comment type="subunit">
    <text evidence="1">Homotrimer.</text>
</comment>
<sequence>MFTGIVEERGEVTGREALVDAARLTIRGPMVTADAGHGDSIAVNGVCLTVVDVLPDGQFTADVMAETLNRSNLGELRPGSRVNLERAAALGSRLGGHIVQGHVDATGEIVARCPSEHWEVVRIEMPASVARYVVEKGSITVDGISLTVSGLGAEQRDWFEVSLIPTTRELTTLGSAAVGTRVNLEVDVVAKYVERLMRSAG</sequence>
<accession>P9WK35</accession>
<accession>L0T6K5</accession>
<accession>P65327</accession>
<accession>P71680</accession>
<protein>
    <recommendedName>
        <fullName>Riboflavin synthase</fullName>
        <shortName>RS</shortName>
        <ecNumber>2.5.1.9</ecNumber>
    </recommendedName>
</protein>
<proteinExistence type="evidence at protein level"/>
<feature type="chain" id="PRO_0000068168" description="Riboflavin synthase">
    <location>
        <begin position="1"/>
        <end position="201"/>
    </location>
</feature>
<feature type="repeat" description="Lumazine-binding 1">
    <location>
        <begin position="1"/>
        <end position="97"/>
    </location>
</feature>
<feature type="repeat" description="Lumazine-binding 2">
    <location>
        <begin position="98"/>
        <end position="197"/>
    </location>
</feature>
<feature type="binding site" evidence="3">
    <location>
        <begin position="4"/>
        <end position="6"/>
    </location>
    <ligand>
        <name>2,4-dihydroxypteridine</name>
        <dbReference type="ChEBI" id="CHEBI:16489"/>
        <label>1</label>
    </ligand>
</feature>
<feature type="binding site" evidence="3">
    <location>
        <begin position="47"/>
        <end position="49"/>
    </location>
    <ligand>
        <name>2,4-dihydroxypteridine</name>
        <dbReference type="ChEBI" id="CHEBI:16489"/>
        <label>2</label>
        <note>ligand shared between two trimeric partners</note>
    </ligand>
</feature>
<feature type="binding site" evidence="3">
    <location>
        <begin position="62"/>
        <end position="67"/>
    </location>
    <ligand>
        <name>2,4-dihydroxypteridine</name>
        <dbReference type="ChEBI" id="CHEBI:16489"/>
        <label>2</label>
        <note>ligand shared between two trimeric partners</note>
    </ligand>
</feature>
<feature type="binding site" evidence="2">
    <location>
        <begin position="101"/>
        <end position="103"/>
    </location>
    <ligand>
        <name>2,4-dihydroxypteridine</name>
        <dbReference type="ChEBI" id="CHEBI:16489"/>
        <label>2</label>
        <note>ligand shared between two trimeric partners</note>
    </ligand>
</feature>
<feature type="binding site" description="in other chain" evidence="3">
    <location>
        <position position="136"/>
    </location>
    <ligand>
        <name>2,4-dihydroxypteridine</name>
        <dbReference type="ChEBI" id="CHEBI:16489"/>
        <label>2</label>
        <note>ligand shared between two trimeric partners</note>
    </ligand>
</feature>
<feature type="binding site" evidence="3">
    <location>
        <begin position="145"/>
        <end position="147"/>
    </location>
    <ligand>
        <name>2,4-dihydroxypteridine</name>
        <dbReference type="ChEBI" id="CHEBI:16489"/>
        <label>1</label>
    </ligand>
</feature>
<feature type="binding site" evidence="3">
    <location>
        <begin position="162"/>
        <end position="167"/>
    </location>
    <ligand>
        <name>2,4-dihydroxypteridine</name>
        <dbReference type="ChEBI" id="CHEBI:16489"/>
        <label>1</label>
    </ligand>
</feature>
<evidence type="ECO:0000250" key="1"/>
<evidence type="ECO:0000250" key="2">
    <source>
        <dbReference type="UniProtKB" id="P0AFU8"/>
    </source>
</evidence>
<evidence type="ECO:0000250" key="3">
    <source>
        <dbReference type="UniProtKB" id="Q2YN92"/>
    </source>
</evidence>